<accession>A9KEE7</accession>
<gene>
    <name evidence="1" type="primary">rpsP</name>
    <name type="ordered locus">CBUD_1629</name>
</gene>
<sequence>MVVIRLARGGSKKNPFYHIVVADRRKPRDGRFIERVGYYNPMARGQDIRLQLEKERISHWLNQGAQTSLRVKHLIKKLEKSPEEAQKGGMRKGEFKRLQAEQAAKAQKKAVATEEPKAEEAKEAPPAESQAAEGKEE</sequence>
<proteinExistence type="inferred from homology"/>
<comment type="similarity">
    <text evidence="1">Belongs to the bacterial ribosomal protein bS16 family.</text>
</comment>
<comment type="sequence caution" evidence="3">
    <conflict type="erroneous initiation">
        <sequence resource="EMBL-CDS" id="ABS76729"/>
    </conflict>
</comment>
<evidence type="ECO:0000255" key="1">
    <source>
        <dbReference type="HAMAP-Rule" id="MF_00385"/>
    </source>
</evidence>
<evidence type="ECO:0000256" key="2">
    <source>
        <dbReference type="SAM" id="MobiDB-lite"/>
    </source>
</evidence>
<evidence type="ECO:0000305" key="3"/>
<dbReference type="EMBL" id="CP000733">
    <property type="protein sequence ID" value="ABS76729.2"/>
    <property type="status" value="ALT_INIT"/>
    <property type="molecule type" value="Genomic_DNA"/>
</dbReference>
<dbReference type="SMR" id="A9KEE7"/>
<dbReference type="KEGG" id="cbd:CBUD_1629"/>
<dbReference type="HOGENOM" id="CLU_100590_3_0_6"/>
<dbReference type="Proteomes" id="UP000008555">
    <property type="component" value="Chromosome"/>
</dbReference>
<dbReference type="GO" id="GO:0005737">
    <property type="term" value="C:cytoplasm"/>
    <property type="evidence" value="ECO:0007669"/>
    <property type="project" value="UniProtKB-ARBA"/>
</dbReference>
<dbReference type="GO" id="GO:0015935">
    <property type="term" value="C:small ribosomal subunit"/>
    <property type="evidence" value="ECO:0007669"/>
    <property type="project" value="TreeGrafter"/>
</dbReference>
<dbReference type="GO" id="GO:0003735">
    <property type="term" value="F:structural constituent of ribosome"/>
    <property type="evidence" value="ECO:0007669"/>
    <property type="project" value="InterPro"/>
</dbReference>
<dbReference type="GO" id="GO:0006412">
    <property type="term" value="P:translation"/>
    <property type="evidence" value="ECO:0007669"/>
    <property type="project" value="UniProtKB-UniRule"/>
</dbReference>
<dbReference type="Gene3D" id="3.30.1320.10">
    <property type="match status" value="1"/>
</dbReference>
<dbReference type="HAMAP" id="MF_00385">
    <property type="entry name" value="Ribosomal_bS16"/>
    <property type="match status" value="1"/>
</dbReference>
<dbReference type="InterPro" id="IPR000307">
    <property type="entry name" value="Ribosomal_bS16"/>
</dbReference>
<dbReference type="InterPro" id="IPR023803">
    <property type="entry name" value="Ribosomal_bS16_dom_sf"/>
</dbReference>
<dbReference type="NCBIfam" id="TIGR00002">
    <property type="entry name" value="S16"/>
    <property type="match status" value="1"/>
</dbReference>
<dbReference type="PANTHER" id="PTHR12919">
    <property type="entry name" value="30S RIBOSOMAL PROTEIN S16"/>
    <property type="match status" value="1"/>
</dbReference>
<dbReference type="PANTHER" id="PTHR12919:SF20">
    <property type="entry name" value="SMALL RIBOSOMAL SUBUNIT PROTEIN BS16M"/>
    <property type="match status" value="1"/>
</dbReference>
<dbReference type="Pfam" id="PF00886">
    <property type="entry name" value="Ribosomal_S16"/>
    <property type="match status" value="1"/>
</dbReference>
<dbReference type="SUPFAM" id="SSF54565">
    <property type="entry name" value="Ribosomal protein S16"/>
    <property type="match status" value="1"/>
</dbReference>
<protein>
    <recommendedName>
        <fullName evidence="1">Small ribosomal subunit protein bS16</fullName>
    </recommendedName>
    <alternativeName>
        <fullName evidence="3">30S ribosomal protein S16</fullName>
    </alternativeName>
</protein>
<keyword id="KW-0687">Ribonucleoprotein</keyword>
<keyword id="KW-0689">Ribosomal protein</keyword>
<organism>
    <name type="scientific">Coxiella burnetii (strain Dugway 5J108-111)</name>
    <dbReference type="NCBI Taxonomy" id="434922"/>
    <lineage>
        <taxon>Bacteria</taxon>
        <taxon>Pseudomonadati</taxon>
        <taxon>Pseudomonadota</taxon>
        <taxon>Gammaproteobacteria</taxon>
        <taxon>Legionellales</taxon>
        <taxon>Coxiellaceae</taxon>
        <taxon>Coxiella</taxon>
    </lineage>
</organism>
<feature type="chain" id="PRO_1000080145" description="Small ribosomal subunit protein bS16">
    <location>
        <begin position="1"/>
        <end position="137"/>
    </location>
</feature>
<feature type="region of interest" description="Disordered" evidence="2">
    <location>
        <begin position="80"/>
        <end position="137"/>
    </location>
</feature>
<feature type="compositionally biased region" description="Basic and acidic residues" evidence="2">
    <location>
        <begin position="80"/>
        <end position="99"/>
    </location>
</feature>
<feature type="compositionally biased region" description="Basic and acidic residues" evidence="2">
    <location>
        <begin position="111"/>
        <end position="125"/>
    </location>
</feature>
<feature type="compositionally biased region" description="Low complexity" evidence="2">
    <location>
        <begin position="126"/>
        <end position="137"/>
    </location>
</feature>
<name>RS16_COXBN</name>
<reference key="1">
    <citation type="journal article" date="2009" name="Infect. Immun.">
        <title>Comparative genomics reveal extensive transposon-mediated genomic plasticity and diversity among potential effector proteins within the genus Coxiella.</title>
        <authorList>
            <person name="Beare P.A."/>
            <person name="Unsworth N."/>
            <person name="Andoh M."/>
            <person name="Voth D.E."/>
            <person name="Omsland A."/>
            <person name="Gilk S.D."/>
            <person name="Williams K.P."/>
            <person name="Sobral B.W."/>
            <person name="Kupko J.J. III"/>
            <person name="Porcella S.F."/>
            <person name="Samuel J.E."/>
            <person name="Heinzen R.A."/>
        </authorList>
    </citation>
    <scope>NUCLEOTIDE SEQUENCE [LARGE SCALE GENOMIC DNA]</scope>
    <source>
        <strain>Dugway 5J108-111</strain>
    </source>
</reference>